<protein>
    <recommendedName>
        <fullName evidence="1">Nucleoprotein</fullName>
    </recommendedName>
    <alternativeName>
        <fullName evidence="1">Nucleocapsid protein</fullName>
        <shortName evidence="1">Protein N</shortName>
    </alternativeName>
</protein>
<organism>
    <name type="scientific">Influenza A virus (strain A/Duck/Hokkaido/8/1980 H3N8)</name>
    <dbReference type="NCBI Taxonomy" id="387207"/>
    <lineage>
        <taxon>Viruses</taxon>
        <taxon>Riboviria</taxon>
        <taxon>Orthornavirae</taxon>
        <taxon>Negarnaviricota</taxon>
        <taxon>Polyploviricotina</taxon>
        <taxon>Insthoviricetes</taxon>
        <taxon>Articulavirales</taxon>
        <taxon>Orthomyxoviridae</taxon>
        <taxon>Alphainfluenzavirus</taxon>
        <taxon>Alphainfluenzavirus influenzae</taxon>
        <taxon>Influenza A virus</taxon>
    </lineage>
</organism>
<name>NCAP_I80A6</name>
<sequence>MASQGTKRSYEQMETGGERQNATEIRASVGRMVGGIGRFYIQMCTELKLSDYEGRLIQNSITIERMVLSAFDERRNKYLEEHPSAGKDPKKTGGPIYRRRDGKWMRELILYDKEEIRRIWRQANNGEDATAGLTHLMIWHSNLNDATYQRTRALVRTGMDPRMCSLMQGSTLPRRSGAAGAAVKGVGTMVMELIRMIKRGINDRNFWRGENGRRTKIAYERMCNILKGKFQTAAQRAMMDQVRESRNPGNAEIEDLIFLARSALILRGSVAHKSCLPACVYGLAVASGYDFEREGYSLVGIDPFRLLQNSQVFSLIRPNENPAHKSQLVWMACHSAAFEDLRVSSFIRGTRVVPRGQLSTRGVQIASNENMETMDSSTLELRSRYWAIRTRSGGNTNQQRASAGQISVQPTFSVQRNLPFERATIMAAFTGNTEGRTSDMRTEIIRMMESARPEDVSFQGRGVFELSDEKATNPIVPSFDMSNEGSYFFGDNAEEYDN</sequence>
<comment type="function">
    <text evidence="1">Encapsidates the negative strand viral RNA, protecting it from nucleases. The encapsidated genomic RNA is termed the ribonucleoprotein (RNP) and serves as template for transcription and replication. The RNP needs to be localized in the host nucleus to start an infectious cycle, but is too large to diffuse through the nuclear pore complex. NP comprises at least 2 nuclear localization signals that are responsible for the active RNP import into the nucleus through cellular importin alpha/beta pathway. Later in the infection, nclear export of RNPs are mediated through viral proteins NEP interacting with M1 which binds nucleoproteins. It is possible that nucleoprotein binds directly host exportin-1/XPO1 and plays an active role in RNPs nuclear export. M1 interaction with RNP seems to hide nucleoprotein's nuclear localization signals. Soon after a virion infects a new cell, M1 dissociates from the RNP under acidification of the virion driven by M2 protein. Dissociation of M1 from RNP unmasks nucleoprotein's nuclear localization signals, targeting the RNP to the nucleus.</text>
</comment>
<comment type="subunit">
    <text evidence="1">Homomultimerizes to form the nucleocapsid. May bind host exportin-1/XPO1. Binds to viral genomic RNA. Protein-RNA contacts are mediated by a combination of electrostatic interactions between positively charged residues and the phosphate backbone and planar interactions between aromatic side chains and bases.</text>
</comment>
<comment type="subcellular location">
    <subcellularLocation>
        <location evidence="1">Virion</location>
    </subcellularLocation>
    <subcellularLocation>
        <location evidence="1">Host nucleus</location>
    </subcellularLocation>
</comment>
<comment type="PTM">
    <text evidence="1">Late in virus-infected cells, may be cleaved from a 56-kDa protein to a 53-kDa protein by a cellular caspase. This cleavage might be a marker for the onset of apoptosis in infected cells or have a specific function in virus host interaction.</text>
</comment>
<comment type="similarity">
    <text evidence="1">Belongs to the influenza viruses nucleoprotein family.</text>
</comment>
<dbReference type="EMBL" id="AF079571">
    <property type="protein sequence ID" value="AAC31557.1"/>
    <property type="molecule type" value="mRNA"/>
</dbReference>
<dbReference type="EMBL" id="AB275284">
    <property type="protein sequence ID" value="BAF33060.1"/>
    <property type="molecule type" value="Genomic_RNA"/>
</dbReference>
<dbReference type="SMR" id="O90385"/>
<dbReference type="PRO" id="PR:O90385"/>
<dbReference type="Proteomes" id="UP000008578">
    <property type="component" value="Genome"/>
</dbReference>
<dbReference type="GO" id="GO:0019029">
    <property type="term" value="C:helical viral capsid"/>
    <property type="evidence" value="ECO:0007669"/>
    <property type="project" value="UniProtKB-UniRule"/>
</dbReference>
<dbReference type="GO" id="GO:0043657">
    <property type="term" value="C:host cell"/>
    <property type="evidence" value="ECO:0007669"/>
    <property type="project" value="GOC"/>
</dbReference>
<dbReference type="GO" id="GO:0042025">
    <property type="term" value="C:host cell nucleus"/>
    <property type="evidence" value="ECO:0007669"/>
    <property type="project" value="UniProtKB-SubCell"/>
</dbReference>
<dbReference type="GO" id="GO:1990904">
    <property type="term" value="C:ribonucleoprotein complex"/>
    <property type="evidence" value="ECO:0007669"/>
    <property type="project" value="UniProtKB-KW"/>
</dbReference>
<dbReference type="GO" id="GO:0019013">
    <property type="term" value="C:viral nucleocapsid"/>
    <property type="evidence" value="ECO:0007669"/>
    <property type="project" value="UniProtKB-UniRule"/>
</dbReference>
<dbReference type="GO" id="GO:0003723">
    <property type="term" value="F:RNA binding"/>
    <property type="evidence" value="ECO:0007669"/>
    <property type="project" value="UniProtKB-UniRule"/>
</dbReference>
<dbReference type="GO" id="GO:0005198">
    <property type="term" value="F:structural molecule activity"/>
    <property type="evidence" value="ECO:0007669"/>
    <property type="project" value="UniProtKB-UniRule"/>
</dbReference>
<dbReference type="GO" id="GO:0046718">
    <property type="term" value="P:symbiont entry into host cell"/>
    <property type="evidence" value="ECO:0007669"/>
    <property type="project" value="UniProtKB-KW"/>
</dbReference>
<dbReference type="GO" id="GO:0075732">
    <property type="term" value="P:viral penetration into host nucleus"/>
    <property type="evidence" value="ECO:0007669"/>
    <property type="project" value="UniProtKB-UniRule"/>
</dbReference>
<dbReference type="HAMAP" id="MF_04070">
    <property type="entry name" value="INFV_NCAP"/>
    <property type="match status" value="1"/>
</dbReference>
<dbReference type="InterPro" id="IPR002141">
    <property type="entry name" value="Flu_NP"/>
</dbReference>
<dbReference type="Pfam" id="PF00506">
    <property type="entry name" value="Flu_NP"/>
    <property type="match status" value="1"/>
</dbReference>
<dbReference type="SUPFAM" id="SSF161003">
    <property type="entry name" value="flu NP-like"/>
    <property type="match status" value="1"/>
</dbReference>
<accession>O90385</accession>
<evidence type="ECO:0000255" key="1">
    <source>
        <dbReference type="HAMAP-Rule" id="MF_04070"/>
    </source>
</evidence>
<evidence type="ECO:0000256" key="2">
    <source>
        <dbReference type="SAM" id="MobiDB-lite"/>
    </source>
</evidence>
<keyword id="KW-0167">Capsid protein</keyword>
<keyword id="KW-1139">Helical capsid protein</keyword>
<keyword id="KW-1048">Host nucleus</keyword>
<keyword id="KW-0945">Host-virus interaction</keyword>
<keyword id="KW-0687">Ribonucleoprotein</keyword>
<keyword id="KW-0694">RNA-binding</keyword>
<keyword id="KW-0543">Viral nucleoprotein</keyword>
<keyword id="KW-1163">Viral penetration into host nucleus</keyword>
<keyword id="KW-0946">Virion</keyword>
<keyword id="KW-1160">Virus entry into host cell</keyword>
<organismHost>
    <name type="scientific">Aves</name>
    <dbReference type="NCBI Taxonomy" id="8782"/>
</organismHost>
<organismHost>
    <name type="scientific">Equus caballus</name>
    <name type="common">Horse</name>
    <dbReference type="NCBI Taxonomy" id="9796"/>
</organismHost>
<gene>
    <name evidence="1" type="primary">NP</name>
</gene>
<feature type="chain" id="PRO_0000402425" description="Nucleoprotein">
    <location>
        <begin position="1"/>
        <end position="498"/>
    </location>
</feature>
<feature type="region of interest" description="Disordered" evidence="2">
    <location>
        <begin position="1"/>
        <end position="21"/>
    </location>
</feature>
<feature type="short sequence motif" description="Unconventional nuclear localization signal" evidence="1">
    <location>
        <begin position="1"/>
        <end position="18"/>
    </location>
</feature>
<feature type="short sequence motif" description="Bipartite nuclear localization signal" evidence="1">
    <location>
        <begin position="198"/>
        <end position="216"/>
    </location>
</feature>
<proteinExistence type="evidence at transcript level"/>
<reference key="1">
    <citation type="submission" date="1998-07" db="EMBL/GenBank/DDBJ databases">
        <title>Protection against a lethal avian influenza virus in a mammalian system.</title>
        <authorList>
            <person name="Riberdy J.M."/>
            <person name="Flynn K.J."/>
            <person name="Stech J."/>
            <person name="Webster R.G."/>
            <person name="Altman J.D."/>
            <person name="Doherty P.C."/>
        </authorList>
    </citation>
    <scope>NUCLEOTIDE SEQUENCE [MRNA]</scope>
</reference>
<reference key="2">
    <citation type="submission" date="2006-09" db="EMBL/GenBank/DDBJ databases">
        <title>Evolutionary characterization of H3N8 viruses isolated from ducks in Hokkaido.</title>
        <authorList>
            <person name="Kida H."/>
            <person name="Sakoda Y."/>
        </authorList>
    </citation>
    <scope>NUCLEOTIDE SEQUENCE [GENOMIC RNA]</scope>
</reference>